<keyword id="KW-1003">Cell membrane</keyword>
<keyword id="KW-0378">Hydrolase</keyword>
<keyword id="KW-0460">Magnesium</keyword>
<keyword id="KW-0472">Membrane</keyword>
<keyword id="KW-1185">Reference proteome</keyword>
<comment type="function">
    <text evidence="1">Degradation of inorganic polyphosphates (polyP). Releases orthophosphate processively from the ends of the polyP chain.</text>
</comment>
<comment type="catalytic activity">
    <reaction evidence="1">
        <text>[phosphate](n) + H2O = [phosphate](n-1) + phosphate + H(+)</text>
        <dbReference type="Rhea" id="RHEA:21528"/>
        <dbReference type="Rhea" id="RHEA-COMP:9859"/>
        <dbReference type="Rhea" id="RHEA-COMP:14279"/>
        <dbReference type="ChEBI" id="CHEBI:15377"/>
        <dbReference type="ChEBI" id="CHEBI:15378"/>
        <dbReference type="ChEBI" id="CHEBI:16838"/>
        <dbReference type="ChEBI" id="CHEBI:43474"/>
        <dbReference type="EC" id="3.6.1.11"/>
    </reaction>
</comment>
<comment type="cofactor">
    <cofactor evidence="1">
        <name>Mg(2+)</name>
        <dbReference type="ChEBI" id="CHEBI:18420"/>
    </cofactor>
</comment>
<comment type="subunit">
    <text evidence="1">Homodimer.</text>
</comment>
<comment type="subcellular location">
    <subcellularLocation>
        <location evidence="1">Cell membrane</location>
        <topology evidence="1">Peripheral membrane protein</topology>
    </subcellularLocation>
</comment>
<comment type="similarity">
    <text evidence="2">Belongs to the GppA/Ppx family.</text>
</comment>
<comment type="caution">
    <text evidence="2">Could be the product of a pseudogene. Compared with other ppx it lacks 200 residues at the C-terminal region.</text>
</comment>
<name>PPX_HAEIN</name>
<sequence>MNDSILEPKHRGNVREIAAIDLGSNSFHMIVARIVNGSIQVLSRLKQKVKLAEGLDENAVLNQEAITRGVNCLALFAERLQGFPMENVNVVGTYTLRRAVNNDEFLRQAAKVFPYPINIISGQTEAKTIYAGVCHTQPEKGRKLVIDIGGGSTEMIIGDDFTPLMAESRHMGCVSFATQFFTDGIISPENFQRARQSAVNKIEDLGLEYRKLGWQSVLGSSGTIKTVAQVIATNLDPNGTITAERLNALIEQTLQAKHFTELNINGLNQDRVDVFVPGLAILSAVFDVFHIQQMRYSDGALREGVIYSLEKNFQVADIRASTA</sequence>
<accession>P44828</accession>
<evidence type="ECO:0000250" key="1">
    <source>
        <dbReference type="UniProtKB" id="P0AFL6"/>
    </source>
</evidence>
<evidence type="ECO:0000305" key="2"/>
<gene>
    <name type="primary">ppx</name>
    <name type="ordered locus">HI_0695</name>
</gene>
<dbReference type="EC" id="3.6.1.11" evidence="1"/>
<dbReference type="EMBL" id="L42023">
    <property type="protein sequence ID" value="AAC22355.1"/>
    <property type="molecule type" value="Genomic_DNA"/>
</dbReference>
<dbReference type="PIR" id="C64087">
    <property type="entry name" value="C64087"/>
</dbReference>
<dbReference type="RefSeq" id="NP_438855.1">
    <property type="nucleotide sequence ID" value="NC_000907.1"/>
</dbReference>
<dbReference type="SMR" id="P44828"/>
<dbReference type="STRING" id="71421.HI_0695"/>
<dbReference type="EnsemblBacteria" id="AAC22355">
    <property type="protein sequence ID" value="AAC22355"/>
    <property type="gene ID" value="HI_0695"/>
</dbReference>
<dbReference type="KEGG" id="hin:HI_0695"/>
<dbReference type="PATRIC" id="fig|71421.8.peg.727"/>
<dbReference type="eggNOG" id="COG0248">
    <property type="taxonomic scope" value="Bacteria"/>
</dbReference>
<dbReference type="HOGENOM" id="CLU_025908_1_1_6"/>
<dbReference type="OrthoDB" id="9793035at2"/>
<dbReference type="PhylomeDB" id="P44828"/>
<dbReference type="BioCyc" id="HINF71421:G1GJ1-730-MONOMER"/>
<dbReference type="Proteomes" id="UP000000579">
    <property type="component" value="Chromosome"/>
</dbReference>
<dbReference type="GO" id="GO:0005886">
    <property type="term" value="C:plasma membrane"/>
    <property type="evidence" value="ECO:0007669"/>
    <property type="project" value="UniProtKB-SubCell"/>
</dbReference>
<dbReference type="GO" id="GO:0004309">
    <property type="term" value="F:exopolyphosphatase activity"/>
    <property type="evidence" value="ECO:0000318"/>
    <property type="project" value="GO_Central"/>
</dbReference>
<dbReference type="GO" id="GO:0006798">
    <property type="term" value="P:polyphosphate catabolic process"/>
    <property type="evidence" value="ECO:0000318"/>
    <property type="project" value="GO_Central"/>
</dbReference>
<dbReference type="CDD" id="cd24116">
    <property type="entry name" value="ASKHA_NBD_EcPPX-like"/>
    <property type="match status" value="1"/>
</dbReference>
<dbReference type="FunFam" id="3.30.420.40:FF:000305">
    <property type="entry name" value="Exopolyphosphatase 2"/>
    <property type="match status" value="1"/>
</dbReference>
<dbReference type="FunFam" id="3.30.420.150:FF:000006">
    <property type="entry name" value="Ppx/GppA family phosphatase"/>
    <property type="match status" value="1"/>
</dbReference>
<dbReference type="Gene3D" id="3.30.420.40">
    <property type="match status" value="1"/>
</dbReference>
<dbReference type="Gene3D" id="3.30.420.150">
    <property type="entry name" value="Exopolyphosphatase. Domain 2"/>
    <property type="match status" value="1"/>
</dbReference>
<dbReference type="InterPro" id="IPR043129">
    <property type="entry name" value="ATPase_NBD"/>
</dbReference>
<dbReference type="InterPro" id="IPR022371">
    <property type="entry name" value="Exopolyphosphatase"/>
</dbReference>
<dbReference type="InterPro" id="IPR050273">
    <property type="entry name" value="GppA/Ppx_hydrolase"/>
</dbReference>
<dbReference type="InterPro" id="IPR003695">
    <property type="entry name" value="Ppx_GppA_N"/>
</dbReference>
<dbReference type="NCBIfam" id="TIGR03706">
    <property type="entry name" value="exo_poly_only"/>
    <property type="match status" value="1"/>
</dbReference>
<dbReference type="PANTHER" id="PTHR30005">
    <property type="entry name" value="EXOPOLYPHOSPHATASE"/>
    <property type="match status" value="1"/>
</dbReference>
<dbReference type="PANTHER" id="PTHR30005:SF14">
    <property type="entry name" value="EXOPOLYPHOSPHATASE"/>
    <property type="match status" value="1"/>
</dbReference>
<dbReference type="Pfam" id="PF02541">
    <property type="entry name" value="Ppx-GppA"/>
    <property type="match status" value="1"/>
</dbReference>
<dbReference type="SUPFAM" id="SSF53067">
    <property type="entry name" value="Actin-like ATPase domain"/>
    <property type="match status" value="2"/>
</dbReference>
<organism>
    <name type="scientific">Haemophilus influenzae (strain ATCC 51907 / DSM 11121 / KW20 / Rd)</name>
    <dbReference type="NCBI Taxonomy" id="71421"/>
    <lineage>
        <taxon>Bacteria</taxon>
        <taxon>Pseudomonadati</taxon>
        <taxon>Pseudomonadota</taxon>
        <taxon>Gammaproteobacteria</taxon>
        <taxon>Pasteurellales</taxon>
        <taxon>Pasteurellaceae</taxon>
        <taxon>Haemophilus</taxon>
    </lineage>
</organism>
<proteinExistence type="uncertain"/>
<feature type="chain" id="PRO_0000194302" description="Putative exopolyphosphatase">
    <location>
        <begin position="1"/>
        <end position="323"/>
    </location>
</feature>
<reference key="1">
    <citation type="journal article" date="1995" name="Science">
        <title>Whole-genome random sequencing and assembly of Haemophilus influenzae Rd.</title>
        <authorList>
            <person name="Fleischmann R.D."/>
            <person name="Adams M.D."/>
            <person name="White O."/>
            <person name="Clayton R.A."/>
            <person name="Kirkness E.F."/>
            <person name="Kerlavage A.R."/>
            <person name="Bult C.J."/>
            <person name="Tomb J.-F."/>
            <person name="Dougherty B.A."/>
            <person name="Merrick J.M."/>
            <person name="McKenney K."/>
            <person name="Sutton G.G."/>
            <person name="FitzHugh W."/>
            <person name="Fields C.A."/>
            <person name="Gocayne J.D."/>
            <person name="Scott J.D."/>
            <person name="Shirley R."/>
            <person name="Liu L.-I."/>
            <person name="Glodek A."/>
            <person name="Kelley J.M."/>
            <person name="Weidman J.F."/>
            <person name="Phillips C.A."/>
            <person name="Spriggs T."/>
            <person name="Hedblom E."/>
            <person name="Cotton M.D."/>
            <person name="Utterback T.R."/>
            <person name="Hanna M.C."/>
            <person name="Nguyen D.T."/>
            <person name="Saudek D.M."/>
            <person name="Brandon R.C."/>
            <person name="Fine L.D."/>
            <person name="Fritchman J.L."/>
            <person name="Fuhrmann J.L."/>
            <person name="Geoghagen N.S.M."/>
            <person name="Gnehm C.L."/>
            <person name="McDonald L.A."/>
            <person name="Small K.V."/>
            <person name="Fraser C.M."/>
            <person name="Smith H.O."/>
            <person name="Venter J.C."/>
        </authorList>
    </citation>
    <scope>NUCLEOTIDE SEQUENCE [LARGE SCALE GENOMIC DNA]</scope>
    <source>
        <strain>ATCC 51907 / DSM 11121 / KW20 / Rd</strain>
    </source>
</reference>
<protein>
    <recommendedName>
        <fullName evidence="1">Putative exopolyphosphatase</fullName>
        <shortName evidence="1">ExopolyPase</shortName>
        <ecNumber evidence="1">3.6.1.11</ecNumber>
    </recommendedName>
</protein>